<feature type="chain" id="PRO_0000098102" description="Uncharacterized tatC-like protein ycf43">
    <location>
        <begin position="1"/>
        <end position="263"/>
    </location>
</feature>
<feature type="transmembrane region" description="Helical" evidence="1">
    <location>
        <begin position="53"/>
        <end position="73"/>
    </location>
</feature>
<feature type="transmembrane region" description="Helical" evidence="1">
    <location>
        <begin position="103"/>
        <end position="123"/>
    </location>
</feature>
<feature type="transmembrane region" description="Helical" evidence="1">
    <location>
        <begin position="130"/>
        <end position="150"/>
    </location>
</feature>
<feature type="transmembrane region" description="Helical" evidence="1">
    <location>
        <begin position="153"/>
        <end position="173"/>
    </location>
</feature>
<feature type="transmembrane region" description="Helical" evidence="1">
    <location>
        <begin position="181"/>
        <end position="201"/>
    </location>
</feature>
<feature type="transmembrane region" description="Helical" evidence="1">
    <location>
        <begin position="213"/>
        <end position="233"/>
    </location>
</feature>
<feature type="transmembrane region" description="Helical" evidence="1">
    <location>
        <begin position="241"/>
        <end position="261"/>
    </location>
</feature>
<reference key="1">
    <citation type="journal article" date="1995" name="Plant Mol. Biol. Rep.">
        <title>The chloroplast genome of a chlorophyll a+c-containing alga, Odontella sinensis.</title>
        <authorList>
            <person name="Kowallik K.V."/>
            <person name="Stoebe B."/>
            <person name="Schaffran I."/>
            <person name="Kroth-Pancic P."/>
            <person name="Freier U."/>
        </authorList>
    </citation>
    <scope>NUCLEOTIDE SEQUENCE [LARGE SCALE GENOMIC DNA]</scope>
</reference>
<accession>P49538</accession>
<proteinExistence type="inferred from homology"/>
<sequence>MFNYPLYIYRQDVKSKLMVTNSDFNFTIKETVTLELPFSEHIEELKQRLFHTFWIILILTFISLCEVKLLVKILELPVNNVKFFQLSPGEYFVSTVKISFYTGFLFGSPFAIGQIILFLLPGLTKKETKIILPLLLSSLGLFGFGLVFSYYALIPAALNFFLNYSDEVIEPLWSFDQYFEFILVLFYSTGLAFQIPIIQILLGLLNIISAKQMLAAWRYIILVSTIIGAILTPSTDPLTQLLLSIAILMLYFSGVGILFLIKN</sequence>
<organism>
    <name type="scientific">Trieres chinensis</name>
    <name type="common">Marine centric diatom</name>
    <name type="synonym">Odontella sinensis</name>
    <dbReference type="NCBI Taxonomy" id="1514140"/>
    <lineage>
        <taxon>Eukaryota</taxon>
        <taxon>Sar</taxon>
        <taxon>Stramenopiles</taxon>
        <taxon>Ochrophyta</taxon>
        <taxon>Bacillariophyta</taxon>
        <taxon>Mediophyceae</taxon>
        <taxon>Biddulphiophycidae</taxon>
        <taxon>Eupodiscales</taxon>
        <taxon>Parodontellaceae</taxon>
        <taxon>Trieres</taxon>
    </lineage>
</organism>
<evidence type="ECO:0000255" key="1"/>
<evidence type="ECO:0000305" key="2"/>
<protein>
    <recommendedName>
        <fullName>Uncharacterized tatC-like protein ycf43</fullName>
    </recommendedName>
</protein>
<dbReference type="EMBL" id="Z67753">
    <property type="protein sequence ID" value="CAA91737.1"/>
    <property type="molecule type" value="Genomic_DNA"/>
</dbReference>
<dbReference type="PIR" id="S78364">
    <property type="entry name" value="S78364"/>
</dbReference>
<dbReference type="SMR" id="P49538"/>
<dbReference type="GO" id="GO:0031969">
    <property type="term" value="C:chloroplast membrane"/>
    <property type="evidence" value="ECO:0007669"/>
    <property type="project" value="UniProtKB-SubCell"/>
</dbReference>
<dbReference type="GO" id="GO:0033281">
    <property type="term" value="C:TAT protein transport complex"/>
    <property type="evidence" value="ECO:0007669"/>
    <property type="project" value="TreeGrafter"/>
</dbReference>
<dbReference type="GO" id="GO:0009977">
    <property type="term" value="F:proton motive force dependent protein transmembrane transporter activity"/>
    <property type="evidence" value="ECO:0007669"/>
    <property type="project" value="TreeGrafter"/>
</dbReference>
<dbReference type="GO" id="GO:0065002">
    <property type="term" value="P:intracellular protein transmembrane transport"/>
    <property type="evidence" value="ECO:0007669"/>
    <property type="project" value="TreeGrafter"/>
</dbReference>
<dbReference type="GO" id="GO:0043953">
    <property type="term" value="P:protein transport by the Tat complex"/>
    <property type="evidence" value="ECO:0007669"/>
    <property type="project" value="TreeGrafter"/>
</dbReference>
<dbReference type="HAMAP" id="MF_00902">
    <property type="entry name" value="TatC"/>
    <property type="match status" value="1"/>
</dbReference>
<dbReference type="InterPro" id="IPR019820">
    <property type="entry name" value="Sec-indep_translocase_CS"/>
</dbReference>
<dbReference type="InterPro" id="IPR002033">
    <property type="entry name" value="TatC"/>
</dbReference>
<dbReference type="NCBIfam" id="TIGR00945">
    <property type="entry name" value="tatC"/>
    <property type="match status" value="1"/>
</dbReference>
<dbReference type="PANTHER" id="PTHR30371">
    <property type="entry name" value="SEC-INDEPENDENT PROTEIN TRANSLOCASE PROTEIN TATC"/>
    <property type="match status" value="1"/>
</dbReference>
<dbReference type="PANTHER" id="PTHR30371:SF0">
    <property type="entry name" value="SEC-INDEPENDENT PROTEIN TRANSLOCASE PROTEIN TATC, CHLOROPLASTIC-RELATED"/>
    <property type="match status" value="1"/>
</dbReference>
<dbReference type="Pfam" id="PF00902">
    <property type="entry name" value="TatC"/>
    <property type="match status" value="1"/>
</dbReference>
<dbReference type="PRINTS" id="PR01840">
    <property type="entry name" value="TATCFAMILY"/>
</dbReference>
<dbReference type="PROSITE" id="PS01218">
    <property type="entry name" value="TATC"/>
    <property type="match status" value="1"/>
</dbReference>
<name>YCF43_TRICV</name>
<geneLocation type="chloroplast"/>
<comment type="subcellular location">
    <subcellularLocation>
        <location evidence="2">Plastid</location>
        <location evidence="2">Chloroplast membrane</location>
        <topology evidence="2">Multi-pass membrane protein</topology>
    </subcellularLocation>
</comment>
<comment type="similarity">
    <text evidence="2">Belongs to the TatC family.</text>
</comment>
<keyword id="KW-0150">Chloroplast</keyword>
<keyword id="KW-0472">Membrane</keyword>
<keyword id="KW-0934">Plastid</keyword>
<keyword id="KW-0812">Transmembrane</keyword>
<keyword id="KW-1133">Transmembrane helix</keyword>
<gene>
    <name type="primary">ycf43</name>
</gene>